<protein>
    <recommendedName>
        <fullName>Na(+)/H(+) antiporter subunit B</fullName>
    </recommendedName>
    <alternativeName>
        <fullName>Mrp complex subunit B</fullName>
    </alternativeName>
    <alternativeName>
        <fullName>Multiple resistance and pH homeostasis protein B</fullName>
    </alternativeName>
</protein>
<proteinExistence type="evidence at protein level"/>
<reference key="1">
    <citation type="journal article" date="1997" name="Microbiology">
        <title>Analysis of the Bacillus subtilis genome: cloning and nucleotide sequence of a 62 kb region between 275 degrees (rrnB) and 284 degrees (pai).</title>
        <authorList>
            <person name="Oudega B."/>
            <person name="Koningstein G."/>
            <person name="Rodrigues L."/>
            <person name="de Sales Ramon M."/>
            <person name="Hilbert H."/>
            <person name="Duesterhoeft A."/>
            <person name="Pohl T.M."/>
            <person name="Weitzenegger T."/>
        </authorList>
    </citation>
    <scope>NUCLEOTIDE SEQUENCE [GENOMIC DNA]</scope>
    <source>
        <strain>168</strain>
    </source>
</reference>
<reference key="2">
    <citation type="journal article" date="1997" name="Nature">
        <title>The complete genome sequence of the Gram-positive bacterium Bacillus subtilis.</title>
        <authorList>
            <person name="Kunst F."/>
            <person name="Ogasawara N."/>
            <person name="Moszer I."/>
            <person name="Albertini A.M."/>
            <person name="Alloni G."/>
            <person name="Azevedo V."/>
            <person name="Bertero M.G."/>
            <person name="Bessieres P."/>
            <person name="Bolotin A."/>
            <person name="Borchert S."/>
            <person name="Borriss R."/>
            <person name="Boursier L."/>
            <person name="Brans A."/>
            <person name="Braun M."/>
            <person name="Brignell S.C."/>
            <person name="Bron S."/>
            <person name="Brouillet S."/>
            <person name="Bruschi C.V."/>
            <person name="Caldwell B."/>
            <person name="Capuano V."/>
            <person name="Carter N.M."/>
            <person name="Choi S.-K."/>
            <person name="Codani J.-J."/>
            <person name="Connerton I.F."/>
            <person name="Cummings N.J."/>
            <person name="Daniel R.A."/>
            <person name="Denizot F."/>
            <person name="Devine K.M."/>
            <person name="Duesterhoeft A."/>
            <person name="Ehrlich S.D."/>
            <person name="Emmerson P.T."/>
            <person name="Entian K.-D."/>
            <person name="Errington J."/>
            <person name="Fabret C."/>
            <person name="Ferrari E."/>
            <person name="Foulger D."/>
            <person name="Fritz C."/>
            <person name="Fujita M."/>
            <person name="Fujita Y."/>
            <person name="Fuma S."/>
            <person name="Galizzi A."/>
            <person name="Galleron N."/>
            <person name="Ghim S.-Y."/>
            <person name="Glaser P."/>
            <person name="Goffeau A."/>
            <person name="Golightly E.J."/>
            <person name="Grandi G."/>
            <person name="Guiseppi G."/>
            <person name="Guy B.J."/>
            <person name="Haga K."/>
            <person name="Haiech J."/>
            <person name="Harwood C.R."/>
            <person name="Henaut A."/>
            <person name="Hilbert H."/>
            <person name="Holsappel S."/>
            <person name="Hosono S."/>
            <person name="Hullo M.-F."/>
            <person name="Itaya M."/>
            <person name="Jones L.-M."/>
            <person name="Joris B."/>
            <person name="Karamata D."/>
            <person name="Kasahara Y."/>
            <person name="Klaerr-Blanchard M."/>
            <person name="Klein C."/>
            <person name="Kobayashi Y."/>
            <person name="Koetter P."/>
            <person name="Koningstein G."/>
            <person name="Krogh S."/>
            <person name="Kumano M."/>
            <person name="Kurita K."/>
            <person name="Lapidus A."/>
            <person name="Lardinois S."/>
            <person name="Lauber J."/>
            <person name="Lazarevic V."/>
            <person name="Lee S.-M."/>
            <person name="Levine A."/>
            <person name="Liu H."/>
            <person name="Masuda S."/>
            <person name="Mauel C."/>
            <person name="Medigue C."/>
            <person name="Medina N."/>
            <person name="Mellado R.P."/>
            <person name="Mizuno M."/>
            <person name="Moestl D."/>
            <person name="Nakai S."/>
            <person name="Noback M."/>
            <person name="Noone D."/>
            <person name="O'Reilly M."/>
            <person name="Ogawa K."/>
            <person name="Ogiwara A."/>
            <person name="Oudega B."/>
            <person name="Park S.-H."/>
            <person name="Parro V."/>
            <person name="Pohl T.M."/>
            <person name="Portetelle D."/>
            <person name="Porwollik S."/>
            <person name="Prescott A.M."/>
            <person name="Presecan E."/>
            <person name="Pujic P."/>
            <person name="Purnelle B."/>
            <person name="Rapoport G."/>
            <person name="Rey M."/>
            <person name="Reynolds S."/>
            <person name="Rieger M."/>
            <person name="Rivolta C."/>
            <person name="Rocha E."/>
            <person name="Roche B."/>
            <person name="Rose M."/>
            <person name="Sadaie Y."/>
            <person name="Sato T."/>
            <person name="Scanlan E."/>
            <person name="Schleich S."/>
            <person name="Schroeter R."/>
            <person name="Scoffone F."/>
            <person name="Sekiguchi J."/>
            <person name="Sekowska A."/>
            <person name="Seror S.J."/>
            <person name="Serror P."/>
            <person name="Shin B.-S."/>
            <person name="Soldo B."/>
            <person name="Sorokin A."/>
            <person name="Tacconi E."/>
            <person name="Takagi T."/>
            <person name="Takahashi H."/>
            <person name="Takemaru K."/>
            <person name="Takeuchi M."/>
            <person name="Tamakoshi A."/>
            <person name="Tanaka T."/>
            <person name="Terpstra P."/>
            <person name="Tognoni A."/>
            <person name="Tosato V."/>
            <person name="Uchiyama S."/>
            <person name="Vandenbol M."/>
            <person name="Vannier F."/>
            <person name="Vassarotti A."/>
            <person name="Viari A."/>
            <person name="Wambutt R."/>
            <person name="Wedler E."/>
            <person name="Wedler H."/>
            <person name="Weitzenegger T."/>
            <person name="Winters P."/>
            <person name="Wipat A."/>
            <person name="Yamamoto H."/>
            <person name="Yamane K."/>
            <person name="Yasumoto K."/>
            <person name="Yata K."/>
            <person name="Yoshida K."/>
            <person name="Yoshikawa H.-F."/>
            <person name="Zumstein E."/>
            <person name="Yoshikawa H."/>
            <person name="Danchin A."/>
        </authorList>
    </citation>
    <scope>NUCLEOTIDE SEQUENCE [LARGE SCALE GENOMIC DNA]</scope>
    <source>
        <strain>168</strain>
    </source>
</reference>
<reference key="3">
    <citation type="journal article" date="1999" name="J. Bacteriol.">
        <title>mrp, a multigene, multifunctional locus in Bacillus subtilis with roles in resistance to cholate and to Na+ and in pH homeostasis.</title>
        <authorList>
            <person name="Ito M."/>
            <person name="Guffanti A.A."/>
            <person name="Oudega B."/>
            <person name="Krulwich T.A."/>
        </authorList>
    </citation>
    <scope>FUNCTION</scope>
</reference>
<reference key="4">
    <citation type="journal article" date="2001" name="FEBS Lett.">
        <title>Mrp-dependent Na(+)/H(+) antiporters of Bacillus exhibit characteristics that are unanticipated for completely secondary active transporters.</title>
        <authorList>
            <person name="Ito M."/>
            <person name="Guffanti A.A."/>
            <person name="Krulwich T.A."/>
        </authorList>
    </citation>
    <scope>COUPLING ENERGIZATION MODE</scope>
</reference>
<reference key="5">
    <citation type="journal article" date="2007" name="J. Bacteriol.">
        <title>Catalytic properties of Staphylococcus aureus and Bacillus members of the secondary cation/proton antiporter-3 (Mrp) family are revealed by an optimized assay in an Escherichia coli host.</title>
        <authorList>
            <person name="Swartz T.H."/>
            <person name="Ito M."/>
            <person name="Ohira T."/>
            <person name="Natsui S."/>
            <person name="Hicks D.B."/>
            <person name="Krulwich T.A."/>
        </authorList>
    </citation>
    <scope>FUNCTION IN ANTIPORT OF LITHIUM</scope>
</reference>
<reference key="6">
    <citation type="journal article" date="2007" name="J. Bacteriol.">
        <title>Complex formation by the mrpABCDEFG gene products, which constitute a principal Na+/H+ antiporter in Bacillus subtilis.</title>
        <authorList>
            <person name="Kajiyama Y."/>
            <person name="Otagiri M."/>
            <person name="Sekiguchi J."/>
            <person name="Kosono S."/>
            <person name="Kudo T."/>
        </authorList>
    </citation>
    <scope>SUBUNIT</scope>
    <source>
        <strain>168 / Marburg / UOT1285</strain>
    </source>
</reference>
<accession>O05259</accession>
<comment type="function">
    <text evidence="2 3">Mrp complex is a Na(+)/H(+) antiporter that is considered to be the major Na(+) excretion system in B.subtilis. Has a major role in Na(+) resistance and a minor role in Na(+)- and K(+)-dependent pH homeostasis as compared to TetB. MrpA may be the actual Na(+)/H(+) antiporter, although the six other Mrp proteins are all required for Na(+)/H(+) antiport activity and Na(+) resistance. MrpA is required for initiation of sporulation when external Na(+) concentration increases. Also transports Li(+) but not K(+), Ca(2+) or Mg(2+).</text>
</comment>
<comment type="subunit">
    <text evidence="4">Forms a heterooligomeric complex that consists of seven subunits: MrpA, MrpB, MrpC, MrpD, MrpE, MrpF and MrpG.</text>
</comment>
<comment type="subcellular location">
    <subcellularLocation>
        <location evidence="5">Cell membrane</location>
        <topology evidence="5">Multi-pass membrane protein</topology>
    </subcellularLocation>
</comment>
<comment type="miscellaneous">
    <text>Mrp-dependent antiport apparently occurs by a secondary, proton motive force-dependent mechanism, but the similarity of several Mrp proteins to membrane-embedded subunits of energy-coupled NADH dehydrogenase complexes raises the possibility that there is a capacity for electron transport that could provide a primary energy coupling option for Mrp functions.</text>
</comment>
<comment type="similarity">
    <text evidence="5">Belongs to the CPA3 antiporters (TC 2.A.63) subunit B family.</text>
</comment>
<keyword id="KW-0050">Antiport</keyword>
<keyword id="KW-1003">Cell membrane</keyword>
<keyword id="KW-0375">Hydrogen ion transport</keyword>
<keyword id="KW-0406">Ion transport</keyword>
<keyword id="KW-0472">Membrane</keyword>
<keyword id="KW-1185">Reference proteome</keyword>
<keyword id="KW-0915">Sodium</keyword>
<keyword id="KW-0739">Sodium transport</keyword>
<keyword id="KW-0812">Transmembrane</keyword>
<keyword id="KW-1133">Transmembrane helix</keyword>
<keyword id="KW-0813">Transport</keyword>
<organism>
    <name type="scientific">Bacillus subtilis (strain 168)</name>
    <dbReference type="NCBI Taxonomy" id="224308"/>
    <lineage>
        <taxon>Bacteria</taxon>
        <taxon>Bacillati</taxon>
        <taxon>Bacillota</taxon>
        <taxon>Bacilli</taxon>
        <taxon>Bacillales</taxon>
        <taxon>Bacillaceae</taxon>
        <taxon>Bacillus</taxon>
    </lineage>
</organism>
<gene>
    <name type="primary">mrpB</name>
    <name type="synonym">yufU</name>
    <name type="ordered locus">BSU31610</name>
</gene>
<name>MRPB_BACSU</name>
<sequence>MNEQKTNDLILQTATKLVSFIILLFSFYLFLSGHNAPGGGFVGGLITSSSIVLLLLAYDLKTVRSLLPVNFIYVAGAGLLLAVLTGVGSFVFGAPFLTHTFGYFQLPILGKTELATATIFDLGVYLVVVGITMTIIQTIGEEE</sequence>
<evidence type="ECO:0000255" key="1"/>
<evidence type="ECO:0000269" key="2">
    <source>
    </source>
</evidence>
<evidence type="ECO:0000269" key="3">
    <source>
    </source>
</evidence>
<evidence type="ECO:0000269" key="4">
    <source>
    </source>
</evidence>
<evidence type="ECO:0000305" key="5"/>
<dbReference type="EMBL" id="Z93937">
    <property type="protein sequence ID" value="CAB07943.1"/>
    <property type="molecule type" value="Genomic_DNA"/>
</dbReference>
<dbReference type="EMBL" id="AL009126">
    <property type="protein sequence ID" value="CAB15150.1"/>
    <property type="molecule type" value="Genomic_DNA"/>
</dbReference>
<dbReference type="PIR" id="B70010">
    <property type="entry name" value="B70010"/>
</dbReference>
<dbReference type="RefSeq" id="NP_391039.1">
    <property type="nucleotide sequence ID" value="NC_000964.3"/>
</dbReference>
<dbReference type="RefSeq" id="WP_003228819.1">
    <property type="nucleotide sequence ID" value="NZ_OZ025638.1"/>
</dbReference>
<dbReference type="SMR" id="O05259"/>
<dbReference type="FunCoup" id="O05259">
    <property type="interactions" value="46"/>
</dbReference>
<dbReference type="STRING" id="224308.BSU31610"/>
<dbReference type="TCDB" id="2.A.63.1.4">
    <property type="family name" value="the monovalent cation (k(+) or na(+)):proton antiporter-3 (cpa3) family"/>
</dbReference>
<dbReference type="PaxDb" id="224308-BSU31610"/>
<dbReference type="EnsemblBacteria" id="CAB15150">
    <property type="protein sequence ID" value="CAB15150"/>
    <property type="gene ID" value="BSU_31610"/>
</dbReference>
<dbReference type="GeneID" id="937177"/>
<dbReference type="KEGG" id="bsu:BSU31610"/>
<dbReference type="PATRIC" id="fig|224308.179.peg.3426"/>
<dbReference type="eggNOG" id="COG2111">
    <property type="taxonomic scope" value="Bacteria"/>
</dbReference>
<dbReference type="InParanoid" id="O05259"/>
<dbReference type="OrthoDB" id="9798859at2"/>
<dbReference type="PhylomeDB" id="O05259"/>
<dbReference type="BioCyc" id="BSUB:BSU31610-MONOMER"/>
<dbReference type="Proteomes" id="UP000001570">
    <property type="component" value="Chromosome"/>
</dbReference>
<dbReference type="GO" id="GO:0005886">
    <property type="term" value="C:plasma membrane"/>
    <property type="evidence" value="ECO:0007669"/>
    <property type="project" value="UniProtKB-SubCell"/>
</dbReference>
<dbReference type="GO" id="GO:0015297">
    <property type="term" value="F:antiporter activity"/>
    <property type="evidence" value="ECO:0007669"/>
    <property type="project" value="UniProtKB-KW"/>
</dbReference>
<dbReference type="GO" id="GO:0008324">
    <property type="term" value="F:monoatomic cation transmembrane transporter activity"/>
    <property type="evidence" value="ECO:0007669"/>
    <property type="project" value="InterPro"/>
</dbReference>
<dbReference type="GO" id="GO:1902600">
    <property type="term" value="P:proton transmembrane transport"/>
    <property type="evidence" value="ECO:0007669"/>
    <property type="project" value="UniProtKB-KW"/>
</dbReference>
<dbReference type="GO" id="GO:0006814">
    <property type="term" value="P:sodium ion transport"/>
    <property type="evidence" value="ECO:0007669"/>
    <property type="project" value="UniProtKB-KW"/>
</dbReference>
<dbReference type="InterPro" id="IPR050622">
    <property type="entry name" value="CPA3_antiporter_subunitB"/>
</dbReference>
<dbReference type="InterPro" id="IPR005281">
    <property type="entry name" value="CPA3_sub_B"/>
</dbReference>
<dbReference type="InterPro" id="IPR007182">
    <property type="entry name" value="MnhB"/>
</dbReference>
<dbReference type="NCBIfam" id="TIGR00943">
    <property type="entry name" value="2a6301s02"/>
    <property type="match status" value="1"/>
</dbReference>
<dbReference type="NCBIfam" id="NF009223">
    <property type="entry name" value="PRK12573.1"/>
    <property type="match status" value="1"/>
</dbReference>
<dbReference type="PANTHER" id="PTHR33932">
    <property type="entry name" value="NA(+)/H(+) ANTIPORTER SUBUNIT B"/>
    <property type="match status" value="1"/>
</dbReference>
<dbReference type="PANTHER" id="PTHR33932:SF4">
    <property type="entry name" value="NA(+)_H(+) ANTIPORTER SUBUNIT B"/>
    <property type="match status" value="1"/>
</dbReference>
<dbReference type="Pfam" id="PF04039">
    <property type="entry name" value="MnhB"/>
    <property type="match status" value="1"/>
</dbReference>
<feature type="chain" id="PRO_0000088864" description="Na(+)/H(+) antiporter subunit B">
    <location>
        <begin position="1"/>
        <end position="143"/>
    </location>
</feature>
<feature type="transmembrane region" description="Helical" evidence="1">
    <location>
        <begin position="9"/>
        <end position="31"/>
    </location>
</feature>
<feature type="transmembrane region" description="Helical" evidence="1">
    <location>
        <begin position="36"/>
        <end position="58"/>
    </location>
</feature>
<feature type="transmembrane region" description="Helical" evidence="1">
    <location>
        <begin position="71"/>
        <end position="93"/>
    </location>
</feature>
<feature type="transmembrane region" description="Helical" evidence="1">
    <location>
        <begin position="117"/>
        <end position="139"/>
    </location>
</feature>